<feature type="chain" id="PRO_0000302478" description="ATP-dependent dethiobiotin synthetase BioD">
    <location>
        <begin position="1"/>
        <end position="235"/>
    </location>
</feature>
<feature type="active site" evidence="1">
    <location>
        <position position="37"/>
    </location>
</feature>
<feature type="binding site" evidence="1">
    <location>
        <begin position="12"/>
        <end position="17"/>
    </location>
    <ligand>
        <name>ATP</name>
        <dbReference type="ChEBI" id="CHEBI:30616"/>
    </ligand>
</feature>
<feature type="binding site" evidence="1">
    <location>
        <position position="16"/>
    </location>
    <ligand>
        <name>Mg(2+)</name>
        <dbReference type="ChEBI" id="CHEBI:18420"/>
    </ligand>
</feature>
<feature type="binding site" evidence="1">
    <location>
        <position position="41"/>
    </location>
    <ligand>
        <name>substrate</name>
    </ligand>
</feature>
<feature type="binding site" evidence="1">
    <location>
        <position position="51"/>
    </location>
    <ligand>
        <name>ATP</name>
        <dbReference type="ChEBI" id="CHEBI:30616"/>
    </ligand>
</feature>
<feature type="binding site" evidence="1">
    <location>
        <position position="51"/>
    </location>
    <ligand>
        <name>Mg(2+)</name>
        <dbReference type="ChEBI" id="CHEBI:18420"/>
    </ligand>
</feature>
<feature type="binding site" evidence="1">
    <location>
        <begin position="112"/>
        <end position="115"/>
    </location>
    <ligand>
        <name>ATP</name>
        <dbReference type="ChEBI" id="CHEBI:30616"/>
    </ligand>
</feature>
<feature type="binding site" evidence="1">
    <location>
        <position position="112"/>
    </location>
    <ligand>
        <name>Mg(2+)</name>
        <dbReference type="ChEBI" id="CHEBI:18420"/>
    </ligand>
</feature>
<feature type="binding site" evidence="1">
    <location>
        <begin position="202"/>
        <end position="204"/>
    </location>
    <ligand>
        <name>ATP</name>
        <dbReference type="ChEBI" id="CHEBI:30616"/>
    </ligand>
</feature>
<dbReference type="EC" id="6.3.3.3" evidence="1"/>
<dbReference type="EMBL" id="CP000002">
    <property type="protein sequence ID" value="AAU22355.1"/>
    <property type="molecule type" value="Genomic_DNA"/>
</dbReference>
<dbReference type="EMBL" id="AE017333">
    <property type="protein sequence ID" value="AAU39704.1"/>
    <property type="molecule type" value="Genomic_DNA"/>
</dbReference>
<dbReference type="RefSeq" id="WP_003179691.1">
    <property type="nucleotide sequence ID" value="NC_006322.1"/>
</dbReference>
<dbReference type="SMR" id="Q65ML0"/>
<dbReference type="STRING" id="279010.BL00955"/>
<dbReference type="GeneID" id="92862649"/>
<dbReference type="KEGG" id="bld:BLi00769"/>
<dbReference type="KEGG" id="bli:BL00955"/>
<dbReference type="eggNOG" id="COG0132">
    <property type="taxonomic scope" value="Bacteria"/>
</dbReference>
<dbReference type="HOGENOM" id="CLU_072551_3_1_9"/>
<dbReference type="UniPathway" id="UPA00078">
    <property type="reaction ID" value="UER00161"/>
</dbReference>
<dbReference type="Proteomes" id="UP000000606">
    <property type="component" value="Chromosome"/>
</dbReference>
<dbReference type="GO" id="GO:0005829">
    <property type="term" value="C:cytosol"/>
    <property type="evidence" value="ECO:0007669"/>
    <property type="project" value="TreeGrafter"/>
</dbReference>
<dbReference type="GO" id="GO:0005524">
    <property type="term" value="F:ATP binding"/>
    <property type="evidence" value="ECO:0007669"/>
    <property type="project" value="UniProtKB-UniRule"/>
</dbReference>
<dbReference type="GO" id="GO:0004141">
    <property type="term" value="F:dethiobiotin synthase activity"/>
    <property type="evidence" value="ECO:0007669"/>
    <property type="project" value="UniProtKB-UniRule"/>
</dbReference>
<dbReference type="GO" id="GO:0000287">
    <property type="term" value="F:magnesium ion binding"/>
    <property type="evidence" value="ECO:0007669"/>
    <property type="project" value="UniProtKB-UniRule"/>
</dbReference>
<dbReference type="GO" id="GO:0009102">
    <property type="term" value="P:biotin biosynthetic process"/>
    <property type="evidence" value="ECO:0007669"/>
    <property type="project" value="UniProtKB-UniRule"/>
</dbReference>
<dbReference type="CDD" id="cd03109">
    <property type="entry name" value="DTBS"/>
    <property type="match status" value="1"/>
</dbReference>
<dbReference type="FunFam" id="3.40.50.300:FF:000292">
    <property type="entry name" value="ATP-dependent dethiobiotin synthetase BioD"/>
    <property type="match status" value="1"/>
</dbReference>
<dbReference type="Gene3D" id="3.40.50.300">
    <property type="entry name" value="P-loop containing nucleotide triphosphate hydrolases"/>
    <property type="match status" value="1"/>
</dbReference>
<dbReference type="HAMAP" id="MF_00336">
    <property type="entry name" value="BioD"/>
    <property type="match status" value="1"/>
</dbReference>
<dbReference type="InterPro" id="IPR004472">
    <property type="entry name" value="DTB_synth_BioD"/>
</dbReference>
<dbReference type="InterPro" id="IPR027417">
    <property type="entry name" value="P-loop_NTPase"/>
</dbReference>
<dbReference type="NCBIfam" id="TIGR00347">
    <property type="entry name" value="bioD"/>
    <property type="match status" value="1"/>
</dbReference>
<dbReference type="PANTHER" id="PTHR43210:SF2">
    <property type="entry name" value="ATP-DEPENDENT DETHIOBIOTIN SYNTHETASE BIOD 2"/>
    <property type="match status" value="1"/>
</dbReference>
<dbReference type="PANTHER" id="PTHR43210">
    <property type="entry name" value="DETHIOBIOTIN SYNTHETASE"/>
    <property type="match status" value="1"/>
</dbReference>
<dbReference type="Pfam" id="PF13500">
    <property type="entry name" value="AAA_26"/>
    <property type="match status" value="1"/>
</dbReference>
<dbReference type="PIRSF" id="PIRSF006755">
    <property type="entry name" value="DTB_synth"/>
    <property type="match status" value="1"/>
</dbReference>
<dbReference type="SUPFAM" id="SSF52540">
    <property type="entry name" value="P-loop containing nucleoside triphosphate hydrolases"/>
    <property type="match status" value="1"/>
</dbReference>
<name>BIOD_BACLD</name>
<keyword id="KW-0067">ATP-binding</keyword>
<keyword id="KW-0093">Biotin biosynthesis</keyword>
<keyword id="KW-0963">Cytoplasm</keyword>
<keyword id="KW-0436">Ligase</keyword>
<keyword id="KW-0460">Magnesium</keyword>
<keyword id="KW-0479">Metal-binding</keyword>
<keyword id="KW-0547">Nucleotide-binding</keyword>
<keyword id="KW-1185">Reference proteome</keyword>
<sequence length="235" mass="25529">MKGFFVTGTDTGVGKTFIACGLAALLKEQHVDVGVFKPFLSGELASDPQSDTALLKNMSETPLTDEEVTPFIFKEPLAPYTAAKLEGRTVGLEDAVNHWKKIKDRHECFIVEGAGGIAVPLGEDYFVSDLIKALDLPAVIVARPNLGTINHTYLTAQYAKQMGIRVIGIVINGISSRPGLDEQTNPDMIERFCGVPLLGVTPKLEDASPTQIHHMIKDHVDVSLIMNQMQMGAEK</sequence>
<reference key="1">
    <citation type="journal article" date="2004" name="J. Mol. Microbiol. Biotechnol.">
        <title>The complete genome sequence of Bacillus licheniformis DSM13, an organism with great industrial potential.</title>
        <authorList>
            <person name="Veith B."/>
            <person name="Herzberg C."/>
            <person name="Steckel S."/>
            <person name="Feesche J."/>
            <person name="Maurer K.H."/>
            <person name="Ehrenreich P."/>
            <person name="Baeumer S."/>
            <person name="Henne A."/>
            <person name="Liesegang H."/>
            <person name="Merkl R."/>
            <person name="Ehrenreich A."/>
            <person name="Gottschalk G."/>
        </authorList>
    </citation>
    <scope>NUCLEOTIDE SEQUENCE [LARGE SCALE GENOMIC DNA]</scope>
    <source>
        <strain>ATCC 14580 / DSM 13 / JCM 2505 / CCUG 7422 / NBRC 12200 / NCIMB 9375 / NCTC 10341 / NRRL NRS-1264 / Gibson 46</strain>
    </source>
</reference>
<reference key="2">
    <citation type="journal article" date="2004" name="Genome Biol.">
        <title>Complete genome sequence of the industrial bacterium Bacillus licheniformis and comparisons with closely related Bacillus species.</title>
        <authorList>
            <person name="Rey M.W."/>
            <person name="Ramaiya P."/>
            <person name="Nelson B.A."/>
            <person name="Brody-Karpin S.D."/>
            <person name="Zaretsky E.J."/>
            <person name="Tang M."/>
            <person name="Lopez de Leon A."/>
            <person name="Xiang H."/>
            <person name="Gusti V."/>
            <person name="Clausen I.G."/>
            <person name="Olsen P.B."/>
            <person name="Rasmussen M.D."/>
            <person name="Andersen J.T."/>
            <person name="Joergensen P.L."/>
            <person name="Larsen T.S."/>
            <person name="Sorokin A."/>
            <person name="Bolotin A."/>
            <person name="Lapidus A."/>
            <person name="Galleron N."/>
            <person name="Ehrlich S.D."/>
            <person name="Berka R.M."/>
        </authorList>
    </citation>
    <scope>NUCLEOTIDE SEQUENCE [LARGE SCALE GENOMIC DNA]</scope>
    <source>
        <strain>ATCC 14580 / DSM 13 / JCM 2505 / CCUG 7422 / NBRC 12200 / NCIMB 9375 / NCTC 10341 / NRRL NRS-1264 / Gibson 46</strain>
    </source>
</reference>
<comment type="function">
    <text evidence="1">Catalyzes a mechanistically unusual reaction, the ATP-dependent insertion of CO2 between the N7 and N8 nitrogen atoms of 7,8-diaminopelargonic acid (DAPA, also called 7,8-diammoniononanoate) to form a ureido ring.</text>
</comment>
<comment type="catalytic activity">
    <reaction evidence="1">
        <text>(7R,8S)-7,8-diammoniononanoate + CO2 + ATP = (4R,5S)-dethiobiotin + ADP + phosphate + 3 H(+)</text>
        <dbReference type="Rhea" id="RHEA:15805"/>
        <dbReference type="ChEBI" id="CHEBI:15378"/>
        <dbReference type="ChEBI" id="CHEBI:16526"/>
        <dbReference type="ChEBI" id="CHEBI:30616"/>
        <dbReference type="ChEBI" id="CHEBI:43474"/>
        <dbReference type="ChEBI" id="CHEBI:149469"/>
        <dbReference type="ChEBI" id="CHEBI:149473"/>
        <dbReference type="ChEBI" id="CHEBI:456216"/>
        <dbReference type="EC" id="6.3.3.3"/>
    </reaction>
</comment>
<comment type="cofactor">
    <cofactor evidence="1">
        <name>Mg(2+)</name>
        <dbReference type="ChEBI" id="CHEBI:18420"/>
    </cofactor>
</comment>
<comment type="pathway">
    <text evidence="1">Cofactor biosynthesis; biotin biosynthesis; biotin from 7,8-diaminononanoate: step 1/2.</text>
</comment>
<comment type="subunit">
    <text evidence="1">Homodimer.</text>
</comment>
<comment type="subcellular location">
    <subcellularLocation>
        <location evidence="1">Cytoplasm</location>
    </subcellularLocation>
</comment>
<comment type="similarity">
    <text evidence="1">Belongs to the dethiobiotin synthetase family.</text>
</comment>
<protein>
    <recommendedName>
        <fullName evidence="1">ATP-dependent dethiobiotin synthetase BioD</fullName>
        <ecNumber evidence="1">6.3.3.3</ecNumber>
    </recommendedName>
    <alternativeName>
        <fullName evidence="1">DTB synthetase</fullName>
        <shortName evidence="1">DTBS</shortName>
    </alternativeName>
    <alternativeName>
        <fullName evidence="1">Dethiobiotin synthase</fullName>
    </alternativeName>
</protein>
<gene>
    <name evidence="1" type="primary">bioD</name>
    <name type="ordered locus">BLi00769</name>
    <name type="ordered locus">BL00955</name>
</gene>
<organism>
    <name type="scientific">Bacillus licheniformis (strain ATCC 14580 / DSM 13 / JCM 2505 / CCUG 7422 / NBRC 12200 / NCIMB 9375 / NCTC 10341 / NRRL NRS-1264 / Gibson 46)</name>
    <dbReference type="NCBI Taxonomy" id="279010"/>
    <lineage>
        <taxon>Bacteria</taxon>
        <taxon>Bacillati</taxon>
        <taxon>Bacillota</taxon>
        <taxon>Bacilli</taxon>
        <taxon>Bacillales</taxon>
        <taxon>Bacillaceae</taxon>
        <taxon>Bacillus</taxon>
    </lineage>
</organism>
<evidence type="ECO:0000255" key="1">
    <source>
        <dbReference type="HAMAP-Rule" id="MF_00336"/>
    </source>
</evidence>
<accession>Q65ML0</accession>
<accession>Q62Y03</accession>
<proteinExistence type="inferred from homology"/>